<keyword id="KW-0002">3D-structure</keyword>
<keyword id="KW-0219">Diabetes mellitus</keyword>
<keyword id="KW-1015">Disulfide bond</keyword>
<keyword id="KW-0550">Obesity</keyword>
<keyword id="KW-1185">Reference proteome</keyword>
<keyword id="KW-0964">Secreted</keyword>
<keyword id="KW-0732">Signal</keyword>
<dbReference type="EMBL" id="U18812">
    <property type="protein sequence ID" value="AAA64564.1"/>
    <property type="molecule type" value="mRNA"/>
</dbReference>
<dbReference type="EMBL" id="U22421">
    <property type="protein sequence ID" value="AAA64213.1"/>
    <property type="molecule type" value="Genomic_DNA"/>
</dbReference>
<dbReference type="CCDS" id="CCDS19955.1"/>
<dbReference type="PIR" id="S50863">
    <property type="entry name" value="LTMS"/>
</dbReference>
<dbReference type="RefSeq" id="NP_032519.1">
    <property type="nucleotide sequence ID" value="NM_008493.3"/>
</dbReference>
<dbReference type="PDB" id="7Z3P">
    <property type="method" value="X-ray"/>
    <property type="resolution" value="1.94 A"/>
    <property type="chains" value="A=22-167"/>
</dbReference>
<dbReference type="PDB" id="7Z3R">
    <property type="method" value="X-ray"/>
    <property type="resolution" value="2.95 A"/>
    <property type="chains" value="A=20-167"/>
</dbReference>
<dbReference type="PDB" id="8AVB">
    <property type="method" value="EM"/>
    <property type="resolution" value="4.43 A"/>
    <property type="chains" value="A=21-167"/>
</dbReference>
<dbReference type="PDB" id="8AVC">
    <property type="method" value="EM"/>
    <property type="resolution" value="4.60 A"/>
    <property type="chains" value="A/C/E=21-167"/>
</dbReference>
<dbReference type="PDB" id="8AVD">
    <property type="method" value="EM"/>
    <property type="resolution" value="4.42 A"/>
    <property type="chains" value="A/C/E=21-167"/>
</dbReference>
<dbReference type="PDB" id="8B7Q">
    <property type="method" value="EM"/>
    <property type="resolution" value="4.02 A"/>
    <property type="chains" value="A=21-167"/>
</dbReference>
<dbReference type="PDB" id="8DH8">
    <property type="method" value="EM"/>
    <property type="resolution" value="5.90 A"/>
    <property type="chains" value="C=22-162"/>
</dbReference>
<dbReference type="PDB" id="8DH9">
    <property type="method" value="EM"/>
    <property type="resolution" value="4.50 A"/>
    <property type="chains" value="C/D=1-167"/>
</dbReference>
<dbReference type="PDB" id="8DHA">
    <property type="method" value="EM"/>
    <property type="resolution" value="3.80 A"/>
    <property type="chains" value="C=22-167"/>
</dbReference>
<dbReference type="PDBsum" id="7Z3P"/>
<dbReference type="PDBsum" id="7Z3R"/>
<dbReference type="PDBsum" id="8AVB"/>
<dbReference type="PDBsum" id="8AVC"/>
<dbReference type="PDBsum" id="8AVD"/>
<dbReference type="PDBsum" id="8B7Q"/>
<dbReference type="PDBsum" id="8DH8"/>
<dbReference type="PDBsum" id="8DH9"/>
<dbReference type="PDBsum" id="8DHA"/>
<dbReference type="EMDB" id="EMD-15677"/>
<dbReference type="EMDB" id="EMD-15678"/>
<dbReference type="EMDB" id="EMD-15679"/>
<dbReference type="EMDB" id="EMD-15899"/>
<dbReference type="EMDB" id="EMD-27432"/>
<dbReference type="EMDB" id="EMD-27433"/>
<dbReference type="EMDB" id="EMD-27434"/>
<dbReference type="SMR" id="P41160"/>
<dbReference type="BioGRID" id="201138">
    <property type="interactions" value="4"/>
</dbReference>
<dbReference type="CORUM" id="P41160"/>
<dbReference type="DIP" id="DIP-60999N"/>
<dbReference type="FunCoup" id="P41160">
    <property type="interactions" value="900"/>
</dbReference>
<dbReference type="IntAct" id="P41160">
    <property type="interactions" value="1"/>
</dbReference>
<dbReference type="STRING" id="10090.ENSMUSP00000067046"/>
<dbReference type="PhosphoSitePlus" id="P41160"/>
<dbReference type="CPTAC" id="CPTAC-1473"/>
<dbReference type="PaxDb" id="10090-ENSMUSP00000067046"/>
<dbReference type="ProteomicsDB" id="265060"/>
<dbReference type="Antibodypedia" id="3389">
    <property type="antibodies" value="1409 antibodies from 44 providers"/>
</dbReference>
<dbReference type="DNASU" id="16846"/>
<dbReference type="Ensembl" id="ENSMUST00000069789.12">
    <property type="protein sequence ID" value="ENSMUSP00000067046.6"/>
    <property type="gene ID" value="ENSMUSG00000059201.13"/>
</dbReference>
<dbReference type="GeneID" id="16846"/>
<dbReference type="KEGG" id="mmu:16846"/>
<dbReference type="UCSC" id="uc009bcv.1">
    <property type="organism name" value="mouse"/>
</dbReference>
<dbReference type="AGR" id="MGI:104663"/>
<dbReference type="CTD" id="3952"/>
<dbReference type="MGI" id="MGI:104663">
    <property type="gene designation" value="Lep"/>
</dbReference>
<dbReference type="VEuPathDB" id="HostDB:ENSMUSG00000059201"/>
<dbReference type="eggNOG" id="ENOG502S5K5">
    <property type="taxonomic scope" value="Eukaryota"/>
</dbReference>
<dbReference type="GeneTree" id="ENSGT00390000011772"/>
<dbReference type="HOGENOM" id="CLU_132715_0_0_1"/>
<dbReference type="InParanoid" id="P41160"/>
<dbReference type="OMA" id="MRCGPLC"/>
<dbReference type="OrthoDB" id="9872512at2759"/>
<dbReference type="PhylomeDB" id="P41160"/>
<dbReference type="TreeFam" id="TF105086"/>
<dbReference type="Reactome" id="R-MMU-381771">
    <property type="pathway name" value="Synthesis, secretion, and inactivation of Glucagon-like Peptide-1 (GLP-1)"/>
</dbReference>
<dbReference type="Reactome" id="R-MMU-422085">
    <property type="pathway name" value="Synthesis, secretion, and deacylation of Ghrelin"/>
</dbReference>
<dbReference type="BioGRID-ORCS" id="16846">
    <property type="hits" value="0 hits in 79 CRISPR screens"/>
</dbReference>
<dbReference type="ChiTaRS" id="H2-Ob">
    <property type="organism name" value="mouse"/>
</dbReference>
<dbReference type="PRO" id="PR:P41160"/>
<dbReference type="Proteomes" id="UP000000589">
    <property type="component" value="Chromosome 6"/>
</dbReference>
<dbReference type="RNAct" id="P41160">
    <property type="molecule type" value="protein"/>
</dbReference>
<dbReference type="Bgee" id="ENSMUSG00000059201">
    <property type="expression patterns" value="Expressed in thoracic mammary gland and 51 other cell types or tissues"/>
</dbReference>
<dbReference type="ExpressionAtlas" id="P41160">
    <property type="expression patterns" value="baseline and differential"/>
</dbReference>
<dbReference type="GO" id="GO:0005737">
    <property type="term" value="C:cytoplasm"/>
    <property type="evidence" value="ECO:0000314"/>
    <property type="project" value="BHF-UCL"/>
</dbReference>
<dbReference type="GO" id="GO:0005829">
    <property type="term" value="C:cytosol"/>
    <property type="evidence" value="ECO:0007669"/>
    <property type="project" value="Ensembl"/>
</dbReference>
<dbReference type="GO" id="GO:0005576">
    <property type="term" value="C:extracellular region"/>
    <property type="evidence" value="ECO:0000304"/>
    <property type="project" value="Reactome"/>
</dbReference>
<dbReference type="GO" id="GO:0005615">
    <property type="term" value="C:extracellular space"/>
    <property type="evidence" value="ECO:0000314"/>
    <property type="project" value="BHF-UCL"/>
</dbReference>
<dbReference type="GO" id="GO:0003677">
    <property type="term" value="F:DNA binding"/>
    <property type="evidence" value="ECO:0000314"/>
    <property type="project" value="MGI"/>
</dbReference>
<dbReference type="GO" id="GO:0005179">
    <property type="term" value="F:hormone activity"/>
    <property type="evidence" value="ECO:0000314"/>
    <property type="project" value="UniProtKB"/>
</dbReference>
<dbReference type="GO" id="GO:1990460">
    <property type="term" value="F:leptin receptor binding"/>
    <property type="evidence" value="ECO:0007669"/>
    <property type="project" value="Ensembl"/>
</dbReference>
<dbReference type="GO" id="GO:0051428">
    <property type="term" value="F:peptide hormone receptor binding"/>
    <property type="evidence" value="ECO:0007669"/>
    <property type="project" value="Ensembl"/>
</dbReference>
<dbReference type="GO" id="GO:1990051">
    <property type="term" value="P:activation of protein kinase C activity"/>
    <property type="evidence" value="ECO:0000250"/>
    <property type="project" value="UniProtKB"/>
</dbReference>
<dbReference type="GO" id="GO:0060612">
    <property type="term" value="P:adipose tissue development"/>
    <property type="evidence" value="ECO:0000316"/>
    <property type="project" value="MGI"/>
</dbReference>
<dbReference type="GO" id="GO:0008343">
    <property type="term" value="P:adult feeding behavior"/>
    <property type="evidence" value="ECO:0000314"/>
    <property type="project" value="HGNC-UCL"/>
</dbReference>
<dbReference type="GO" id="GO:0001525">
    <property type="term" value="P:angiogenesis"/>
    <property type="evidence" value="ECO:0007669"/>
    <property type="project" value="Ensembl"/>
</dbReference>
<dbReference type="GO" id="GO:0035904">
    <property type="term" value="P:aorta development"/>
    <property type="evidence" value="ECO:0000315"/>
    <property type="project" value="MGI"/>
</dbReference>
<dbReference type="GO" id="GO:0008206">
    <property type="term" value="P:bile acid metabolic process"/>
    <property type="evidence" value="ECO:0000314"/>
    <property type="project" value="MGI"/>
</dbReference>
<dbReference type="GO" id="GO:0098868">
    <property type="term" value="P:bone growth"/>
    <property type="evidence" value="ECO:0000315"/>
    <property type="project" value="UniProtKB"/>
</dbReference>
<dbReference type="GO" id="GO:0035630">
    <property type="term" value="P:bone mineralization involved in bone maturation"/>
    <property type="evidence" value="ECO:0007669"/>
    <property type="project" value="Ensembl"/>
</dbReference>
<dbReference type="GO" id="GO:0003300">
    <property type="term" value="P:cardiac muscle hypertrophy"/>
    <property type="evidence" value="ECO:0007669"/>
    <property type="project" value="Ensembl"/>
</dbReference>
<dbReference type="GO" id="GO:0007259">
    <property type="term" value="P:cell surface receptor signaling pathway via JAK-STAT"/>
    <property type="evidence" value="ECO:0000314"/>
    <property type="project" value="BHF-UCL"/>
</dbReference>
<dbReference type="GO" id="GO:0032869">
    <property type="term" value="P:cellular response to insulin stimulus"/>
    <property type="evidence" value="ECO:0000314"/>
    <property type="project" value="MGI"/>
</dbReference>
<dbReference type="GO" id="GO:0071298">
    <property type="term" value="P:cellular response to L-ascorbic acid"/>
    <property type="evidence" value="ECO:0007669"/>
    <property type="project" value="Ensembl"/>
</dbReference>
<dbReference type="GO" id="GO:0044320">
    <property type="term" value="P:cellular response to leptin stimulus"/>
    <property type="evidence" value="ECO:0000250"/>
    <property type="project" value="UniProtKB"/>
</dbReference>
<dbReference type="GO" id="GO:0071300">
    <property type="term" value="P:cellular response to retinoic acid"/>
    <property type="evidence" value="ECO:0007669"/>
    <property type="project" value="Ensembl"/>
</dbReference>
<dbReference type="GO" id="GO:0021954">
    <property type="term" value="P:central nervous system neuron development"/>
    <property type="evidence" value="ECO:0000315"/>
    <property type="project" value="MGI"/>
</dbReference>
<dbReference type="GO" id="GO:0008203">
    <property type="term" value="P:cholesterol metabolic process"/>
    <property type="evidence" value="ECO:0000316"/>
    <property type="project" value="MGI"/>
</dbReference>
<dbReference type="GO" id="GO:0007623">
    <property type="term" value="P:circadian rhythm"/>
    <property type="evidence" value="ECO:0007669"/>
    <property type="project" value="Ensembl"/>
</dbReference>
<dbReference type="GO" id="GO:0008340">
    <property type="term" value="P:determination of adult lifespan"/>
    <property type="evidence" value="ECO:0000316"/>
    <property type="project" value="MGI"/>
</dbReference>
<dbReference type="GO" id="GO:0042755">
    <property type="term" value="P:eating behavior"/>
    <property type="evidence" value="ECO:0000316"/>
    <property type="project" value="MGI"/>
</dbReference>
<dbReference type="GO" id="GO:0051541">
    <property type="term" value="P:elastin metabolic process"/>
    <property type="evidence" value="ECO:0000315"/>
    <property type="project" value="MGI"/>
</dbReference>
<dbReference type="GO" id="GO:0097009">
    <property type="term" value="P:energy homeostasis"/>
    <property type="evidence" value="ECO:0000314"/>
    <property type="project" value="UniProt"/>
</dbReference>
<dbReference type="GO" id="GO:0006112">
    <property type="term" value="P:energy reserve metabolic process"/>
    <property type="evidence" value="ECO:0007669"/>
    <property type="project" value="Ensembl"/>
</dbReference>
<dbReference type="GO" id="GO:0006635">
    <property type="term" value="P:fatty acid beta-oxidation"/>
    <property type="evidence" value="ECO:0000316"/>
    <property type="project" value="MGI"/>
</dbReference>
<dbReference type="GO" id="GO:0007565">
    <property type="term" value="P:female pregnancy"/>
    <property type="evidence" value="ECO:0007669"/>
    <property type="project" value="Ensembl"/>
</dbReference>
<dbReference type="GO" id="GO:0042593">
    <property type="term" value="P:glucose homeostasis"/>
    <property type="evidence" value="ECO:0000316"/>
    <property type="project" value="MGI"/>
</dbReference>
<dbReference type="GO" id="GO:0006006">
    <property type="term" value="P:glucose metabolic process"/>
    <property type="evidence" value="ECO:0000315"/>
    <property type="project" value="MGI"/>
</dbReference>
<dbReference type="GO" id="GO:0006114">
    <property type="term" value="P:glycerol biosynthetic process"/>
    <property type="evidence" value="ECO:0007669"/>
    <property type="project" value="Ensembl"/>
</dbReference>
<dbReference type="GO" id="GO:0042445">
    <property type="term" value="P:hormone metabolic process"/>
    <property type="evidence" value="ECO:0000315"/>
    <property type="project" value="MGI"/>
</dbReference>
<dbReference type="GO" id="GO:0030073">
    <property type="term" value="P:insulin secretion"/>
    <property type="evidence" value="ECO:0000316"/>
    <property type="project" value="MGI"/>
</dbReference>
<dbReference type="GO" id="GO:0050892">
    <property type="term" value="P:intestinal absorption"/>
    <property type="evidence" value="ECO:0000250"/>
    <property type="project" value="UniProtKB"/>
</dbReference>
<dbReference type="GO" id="GO:0035556">
    <property type="term" value="P:intracellular signal transduction"/>
    <property type="evidence" value="ECO:0007669"/>
    <property type="project" value="Ensembl"/>
</dbReference>
<dbReference type="GO" id="GO:0033210">
    <property type="term" value="P:leptin-mediated signaling pathway"/>
    <property type="evidence" value="ECO:0000314"/>
    <property type="project" value="UniProtKB"/>
</dbReference>
<dbReference type="GO" id="GO:0050901">
    <property type="term" value="P:leukocyte tethering or rolling"/>
    <property type="evidence" value="ECO:0007669"/>
    <property type="project" value="Ensembl"/>
</dbReference>
<dbReference type="GO" id="GO:0006629">
    <property type="term" value="P:lipid metabolic process"/>
    <property type="evidence" value="ECO:0000315"/>
    <property type="project" value="MGI"/>
</dbReference>
<dbReference type="GO" id="GO:0043066">
    <property type="term" value="P:negative regulation of apoptotic process"/>
    <property type="evidence" value="ECO:0007669"/>
    <property type="project" value="Ensembl"/>
</dbReference>
<dbReference type="GO" id="GO:0032099">
    <property type="term" value="P:negative regulation of appetite"/>
    <property type="evidence" value="ECO:0000314"/>
    <property type="project" value="HGNC-UCL"/>
</dbReference>
<dbReference type="GO" id="GO:0038108">
    <property type="term" value="P:negative regulation of appetite by leptin-mediated signaling pathway"/>
    <property type="evidence" value="ECO:0000250"/>
    <property type="project" value="UniProtKB"/>
</dbReference>
<dbReference type="GO" id="GO:0010507">
    <property type="term" value="P:negative regulation of autophagy"/>
    <property type="evidence" value="ECO:0000315"/>
    <property type="project" value="UniProtKB"/>
</dbReference>
<dbReference type="GO" id="GO:0061037">
    <property type="term" value="P:negative regulation of cartilage development"/>
    <property type="evidence" value="ECO:0007669"/>
    <property type="project" value="Ensembl"/>
</dbReference>
<dbReference type="GO" id="GO:0046325">
    <property type="term" value="P:negative regulation of D-glucose import"/>
    <property type="evidence" value="ECO:0000250"/>
    <property type="project" value="UniProtKB"/>
</dbReference>
<dbReference type="GO" id="GO:0070093">
    <property type="term" value="P:negative regulation of glucagon secretion"/>
    <property type="evidence" value="ECO:0000314"/>
    <property type="project" value="BHF-UCL"/>
</dbReference>
<dbReference type="GO" id="GO:2000486">
    <property type="term" value="P:negative regulation of glutamine transport"/>
    <property type="evidence" value="ECO:0007669"/>
    <property type="project" value="Ensembl"/>
</dbReference>
<dbReference type="GO" id="GO:0010888">
    <property type="term" value="P:negative regulation of lipid storage"/>
    <property type="evidence" value="ECO:0007669"/>
    <property type="project" value="Ensembl"/>
</dbReference>
<dbReference type="GO" id="GO:0000122">
    <property type="term" value="P:negative regulation of transcription by RNA polymerase II"/>
    <property type="evidence" value="ECO:0000314"/>
    <property type="project" value="BHF-UCL"/>
</dbReference>
<dbReference type="GO" id="GO:0045906">
    <property type="term" value="P:negative regulation of vasoconstriction"/>
    <property type="evidence" value="ECO:0007669"/>
    <property type="project" value="Ensembl"/>
</dbReference>
<dbReference type="GO" id="GO:0001542">
    <property type="term" value="P:ovulation from ovarian follicle"/>
    <property type="evidence" value="ECO:0007669"/>
    <property type="project" value="Ensembl"/>
</dbReference>
<dbReference type="GO" id="GO:0006909">
    <property type="term" value="P:phagocytosis"/>
    <property type="evidence" value="ECO:0000314"/>
    <property type="project" value="UniProtKB"/>
</dbReference>
<dbReference type="GO" id="GO:0001890">
    <property type="term" value="P:placenta development"/>
    <property type="evidence" value="ECO:0007669"/>
    <property type="project" value="Ensembl"/>
</dbReference>
<dbReference type="GO" id="GO:0120162">
    <property type="term" value="P:positive regulation of cold-induced thermogenesis"/>
    <property type="evidence" value="ECO:0000315"/>
    <property type="project" value="YuBioLab"/>
</dbReference>
<dbReference type="GO" id="GO:0048639">
    <property type="term" value="P:positive regulation of developmental growth"/>
    <property type="evidence" value="ECO:0007669"/>
    <property type="project" value="Ensembl"/>
</dbReference>
<dbReference type="GO" id="GO:1904651">
    <property type="term" value="P:positive regulation of fat cell apoptotic process"/>
    <property type="evidence" value="ECO:0007669"/>
    <property type="project" value="Ensembl"/>
</dbReference>
<dbReference type="GO" id="GO:0046881">
    <property type="term" value="P:positive regulation of follicle-stimulating hormone secretion"/>
    <property type="evidence" value="ECO:0007669"/>
    <property type="project" value="Ensembl"/>
</dbReference>
<dbReference type="GO" id="GO:2000491">
    <property type="term" value="P:positive regulation of hepatic stellate cell activation"/>
    <property type="evidence" value="ECO:0007669"/>
    <property type="project" value="Ensembl"/>
</dbReference>
<dbReference type="GO" id="GO:0046628">
    <property type="term" value="P:positive regulation of insulin receptor signaling pathway"/>
    <property type="evidence" value="ECO:0007669"/>
    <property type="project" value="Ensembl"/>
</dbReference>
<dbReference type="GO" id="GO:0032735">
    <property type="term" value="P:positive regulation of interleukin-12 production"/>
    <property type="evidence" value="ECO:0000314"/>
    <property type="project" value="UniProtKB"/>
</dbReference>
<dbReference type="GO" id="GO:0032755">
    <property type="term" value="P:positive regulation of interleukin-6 production"/>
    <property type="evidence" value="ECO:0000314"/>
    <property type="project" value="UniProtKB"/>
</dbReference>
<dbReference type="GO" id="GO:0032757">
    <property type="term" value="P:positive regulation of interleukin-8 production"/>
    <property type="evidence" value="ECO:0000250"/>
    <property type="project" value="UniProtKB"/>
</dbReference>
<dbReference type="GO" id="GO:0033686">
    <property type="term" value="P:positive regulation of luteinizing hormone secretion"/>
    <property type="evidence" value="ECO:0007669"/>
    <property type="project" value="Ensembl"/>
</dbReference>
<dbReference type="GO" id="GO:0043410">
    <property type="term" value="P:positive regulation of MAPK cascade"/>
    <property type="evidence" value="ECO:0000314"/>
    <property type="project" value="UniProtKB"/>
</dbReference>
<dbReference type="GO" id="GO:0043270">
    <property type="term" value="P:positive regulation of monoatomic ion transport"/>
    <property type="evidence" value="ECO:0007669"/>
    <property type="project" value="Ensembl"/>
</dbReference>
<dbReference type="GO" id="GO:1900745">
    <property type="term" value="P:positive regulation of p38MAPK cascade"/>
    <property type="evidence" value="ECO:0000250"/>
    <property type="project" value="UniProtKB"/>
</dbReference>
<dbReference type="GO" id="GO:0035360">
    <property type="term" value="P:positive regulation of peroxisome proliferator activated receptor signaling pathway"/>
    <property type="evidence" value="ECO:0007669"/>
    <property type="project" value="Ensembl"/>
</dbReference>
<dbReference type="GO" id="GO:0051897">
    <property type="term" value="P:positive regulation of phosphatidylinositol 3-kinase/protein kinase B signal transduction"/>
    <property type="evidence" value="ECO:0000314"/>
    <property type="project" value="UniProtKB"/>
</dbReference>
<dbReference type="GO" id="GO:0042307">
    <property type="term" value="P:positive regulation of protein import into nucleus"/>
    <property type="evidence" value="ECO:0000314"/>
    <property type="project" value="BHF-UCL"/>
</dbReference>
<dbReference type="GO" id="GO:2000379">
    <property type="term" value="P:positive regulation of reactive oxygen species metabolic process"/>
    <property type="evidence" value="ECO:0007669"/>
    <property type="project" value="Ensembl"/>
</dbReference>
<dbReference type="GO" id="GO:0046427">
    <property type="term" value="P:positive regulation of receptor signaling pathway via JAK-STAT"/>
    <property type="evidence" value="ECO:0000314"/>
    <property type="project" value="UniProtKB"/>
</dbReference>
<dbReference type="GO" id="GO:0042102">
    <property type="term" value="P:positive regulation of T cell proliferation"/>
    <property type="evidence" value="ECO:0007669"/>
    <property type="project" value="Ensembl"/>
</dbReference>
<dbReference type="GO" id="GO:0032008">
    <property type="term" value="P:positive regulation of TOR signaling"/>
    <property type="evidence" value="ECO:0007669"/>
    <property type="project" value="Ensembl"/>
</dbReference>
<dbReference type="GO" id="GO:0032760">
    <property type="term" value="P:positive regulation of tumor necrosis factor production"/>
    <property type="evidence" value="ECO:0000314"/>
    <property type="project" value="UniProtKB"/>
</dbReference>
<dbReference type="GO" id="GO:0032310">
    <property type="term" value="P:prostaglandin secretion"/>
    <property type="evidence" value="ECO:0000250"/>
    <property type="project" value="UniProtKB"/>
</dbReference>
<dbReference type="GO" id="GO:0045765">
    <property type="term" value="P:regulation of angiogenesis"/>
    <property type="evidence" value="ECO:0000250"/>
    <property type="project" value="UniProtKB"/>
</dbReference>
<dbReference type="GO" id="GO:0008217">
    <property type="term" value="P:regulation of blood pressure"/>
    <property type="evidence" value="ECO:0007669"/>
    <property type="project" value="Ensembl"/>
</dbReference>
<dbReference type="GO" id="GO:0046850">
    <property type="term" value="P:regulation of bone remodeling"/>
    <property type="evidence" value="ECO:0000315"/>
    <property type="project" value="UniProtKB"/>
</dbReference>
<dbReference type="GO" id="GO:0090335">
    <property type="term" value="P:regulation of brown fat cell differentiation"/>
    <property type="evidence" value="ECO:0000314"/>
    <property type="project" value="UniProtKB"/>
</dbReference>
<dbReference type="GO" id="GO:0051726">
    <property type="term" value="P:regulation of cell cycle"/>
    <property type="evidence" value="ECO:0000314"/>
    <property type="project" value="UniProtKB"/>
</dbReference>
<dbReference type="GO" id="GO:1900015">
    <property type="term" value="P:regulation of cytokine production involved in inflammatory response"/>
    <property type="evidence" value="ECO:0000250"/>
    <property type="project" value="UniProtKB"/>
</dbReference>
<dbReference type="GO" id="GO:0001936">
    <property type="term" value="P:regulation of endothelial cell proliferation"/>
    <property type="evidence" value="ECO:0000250"/>
    <property type="project" value="UniProtKB"/>
</dbReference>
<dbReference type="GO" id="GO:0045598">
    <property type="term" value="P:regulation of fat cell differentiation"/>
    <property type="evidence" value="ECO:0000316"/>
    <property type="project" value="MGI"/>
</dbReference>
<dbReference type="GO" id="GO:0006111">
    <property type="term" value="P:regulation of gluconeogenesis"/>
    <property type="evidence" value="ECO:0000315"/>
    <property type="project" value="MGI"/>
</dbReference>
<dbReference type="GO" id="GO:0050796">
    <property type="term" value="P:regulation of insulin secretion"/>
    <property type="evidence" value="ECO:0000315"/>
    <property type="project" value="MGI"/>
</dbReference>
<dbReference type="GO" id="GO:0030300">
    <property type="term" value="P:regulation of intestinal cholesterol absorption"/>
    <property type="evidence" value="ECO:0000314"/>
    <property type="project" value="MGI"/>
</dbReference>
<dbReference type="GO" id="GO:0046890">
    <property type="term" value="P:regulation of lipid biosynthetic process"/>
    <property type="evidence" value="ECO:0000316"/>
    <property type="project" value="MGI"/>
</dbReference>
<dbReference type="GO" id="GO:0060587">
    <property type="term" value="P:regulation of lipoprotein lipid oxidation"/>
    <property type="evidence" value="ECO:0007669"/>
    <property type="project" value="Ensembl"/>
</dbReference>
<dbReference type="GO" id="GO:0019222">
    <property type="term" value="P:regulation of metabolic process"/>
    <property type="evidence" value="ECO:0000315"/>
    <property type="project" value="MGI"/>
</dbReference>
<dbReference type="GO" id="GO:0032814">
    <property type="term" value="P:regulation of natural killer cell activation"/>
    <property type="evidence" value="ECO:0000250"/>
    <property type="project" value="UniProtKB"/>
</dbReference>
<dbReference type="GO" id="GO:0042269">
    <property type="term" value="P:regulation of natural killer cell mediated cytotoxicity"/>
    <property type="evidence" value="ECO:0000250"/>
    <property type="project" value="UniProtKB"/>
</dbReference>
<dbReference type="GO" id="GO:0032817">
    <property type="term" value="P:regulation of natural killer cell proliferation"/>
    <property type="evidence" value="ECO:0000250"/>
    <property type="project" value="UniProtKB"/>
</dbReference>
<dbReference type="GO" id="GO:0050999">
    <property type="term" value="P:regulation of nitric-oxide synthase activity"/>
    <property type="evidence" value="ECO:0000314"/>
    <property type="project" value="UniProtKB"/>
</dbReference>
<dbReference type="GO" id="GO:1900180">
    <property type="term" value="P:regulation of protein localization to nucleus"/>
    <property type="evidence" value="ECO:0000315"/>
    <property type="project" value="MGI"/>
</dbReference>
<dbReference type="GO" id="GO:0050810">
    <property type="term" value="P:regulation of steroid biosynthetic process"/>
    <property type="evidence" value="ECO:0000315"/>
    <property type="project" value="MGI"/>
</dbReference>
<dbReference type="GO" id="GO:0014823">
    <property type="term" value="P:response to activity"/>
    <property type="evidence" value="ECO:0007669"/>
    <property type="project" value="Ensembl"/>
</dbReference>
<dbReference type="GO" id="GO:0002021">
    <property type="term" value="P:response to dietary excess"/>
    <property type="evidence" value="ECO:0000315"/>
    <property type="project" value="MGI"/>
</dbReference>
<dbReference type="GO" id="GO:0032355">
    <property type="term" value="P:response to estradiol"/>
    <property type="evidence" value="ECO:0007669"/>
    <property type="project" value="Ensembl"/>
</dbReference>
<dbReference type="GO" id="GO:0045471">
    <property type="term" value="P:response to ethanol"/>
    <property type="evidence" value="ECO:0007669"/>
    <property type="project" value="Ensembl"/>
</dbReference>
<dbReference type="GO" id="GO:0001666">
    <property type="term" value="P:response to hypoxia"/>
    <property type="evidence" value="ECO:0007669"/>
    <property type="project" value="Ensembl"/>
</dbReference>
<dbReference type="GO" id="GO:0032868">
    <property type="term" value="P:response to insulin"/>
    <property type="evidence" value="ECO:0000315"/>
    <property type="project" value="MGI"/>
</dbReference>
<dbReference type="GO" id="GO:0033197">
    <property type="term" value="P:response to vitamin E"/>
    <property type="evidence" value="ECO:0007669"/>
    <property type="project" value="Ensembl"/>
</dbReference>
<dbReference type="GO" id="GO:0019953">
    <property type="term" value="P:sexual reproduction"/>
    <property type="evidence" value="ECO:0000315"/>
    <property type="project" value="UniProtKB"/>
</dbReference>
<dbReference type="GO" id="GO:0030217">
    <property type="term" value="P:T cell differentiation"/>
    <property type="evidence" value="ECO:0000315"/>
    <property type="project" value="UniProtKB"/>
</dbReference>
<dbReference type="FunFam" id="1.20.1250.10:FF:000008">
    <property type="entry name" value="Leptin"/>
    <property type="match status" value="1"/>
</dbReference>
<dbReference type="Gene3D" id="1.20.1250.10">
    <property type="match status" value="1"/>
</dbReference>
<dbReference type="InterPro" id="IPR009079">
    <property type="entry name" value="4_helix_cytokine-like_core"/>
</dbReference>
<dbReference type="InterPro" id="IPR000065">
    <property type="entry name" value="Leptin"/>
</dbReference>
<dbReference type="PANTHER" id="PTHR11724">
    <property type="entry name" value="LEPTIN"/>
    <property type="match status" value="1"/>
</dbReference>
<dbReference type="PANTHER" id="PTHR11724:SF1">
    <property type="entry name" value="LEPTIN"/>
    <property type="match status" value="1"/>
</dbReference>
<dbReference type="Pfam" id="PF02024">
    <property type="entry name" value="Leptin"/>
    <property type="match status" value="1"/>
</dbReference>
<dbReference type="PIRSF" id="PIRSF001837">
    <property type="entry name" value="Leptin"/>
    <property type="match status" value="1"/>
</dbReference>
<dbReference type="PRINTS" id="PR00495">
    <property type="entry name" value="LEPTIN"/>
</dbReference>
<dbReference type="SUPFAM" id="SSF47266">
    <property type="entry name" value="4-helical cytokines"/>
    <property type="match status" value="1"/>
</dbReference>
<name>LEP_MOUSE</name>
<protein>
    <recommendedName>
        <fullName>Leptin</fullName>
    </recommendedName>
    <alternativeName>
        <fullName>Obesity factor</fullName>
    </alternativeName>
</protein>
<proteinExistence type="evidence at protein level"/>
<organism>
    <name type="scientific">Mus musculus</name>
    <name type="common">Mouse</name>
    <dbReference type="NCBI Taxonomy" id="10090"/>
    <lineage>
        <taxon>Eukaryota</taxon>
        <taxon>Metazoa</taxon>
        <taxon>Chordata</taxon>
        <taxon>Craniata</taxon>
        <taxon>Vertebrata</taxon>
        <taxon>Euteleostomi</taxon>
        <taxon>Mammalia</taxon>
        <taxon>Eutheria</taxon>
        <taxon>Euarchontoglires</taxon>
        <taxon>Glires</taxon>
        <taxon>Rodentia</taxon>
        <taxon>Myomorpha</taxon>
        <taxon>Muroidea</taxon>
        <taxon>Muridae</taxon>
        <taxon>Murinae</taxon>
        <taxon>Mus</taxon>
        <taxon>Mus</taxon>
    </lineage>
</organism>
<feature type="signal peptide" evidence="4">
    <location>
        <begin position="1"/>
        <end position="21"/>
    </location>
</feature>
<feature type="chain" id="PRO_0000017687" description="Leptin">
    <location>
        <begin position="22"/>
        <end position="167"/>
    </location>
</feature>
<feature type="disulfide bond" evidence="1">
    <location>
        <begin position="117"/>
        <end position="167"/>
    </location>
</feature>
<feature type="sequence variant" description="In 30% the clones.">
    <location>
        <position position="49"/>
    </location>
</feature>
<feature type="helix" evidence="18">
    <location>
        <begin position="24"/>
        <end position="45"/>
    </location>
</feature>
<feature type="helix" evidence="19">
    <location>
        <begin position="46"/>
        <end position="49"/>
    </location>
</feature>
<feature type="strand" evidence="19">
    <location>
        <begin position="53"/>
        <end position="55"/>
    </location>
</feature>
<feature type="helix" evidence="18">
    <location>
        <begin position="72"/>
        <end position="87"/>
    </location>
</feature>
<feature type="helix" evidence="18">
    <location>
        <begin position="92"/>
        <end position="114"/>
    </location>
</feature>
<feature type="helix" evidence="19">
    <location>
        <begin position="131"/>
        <end position="137"/>
    </location>
</feature>
<feature type="helix" evidence="18">
    <location>
        <begin position="142"/>
        <end position="160"/>
    </location>
</feature>
<sequence length="167" mass="18709">MCWRPLCRFLWLWSYLSYVQAVPIQKVQDDTKTLIKTIVTRINDISHTQSVSAKQRVTGLDFIPGLHPILSLSKMDQTLAVYQQVLTSLPSQNVLQIANDLENLRDLLHLLAFSKSCSLPQTSGLQKPESLDGVLEASLYSTEVVALSRLQGSLQDILQQLDVSPEC</sequence>
<reference key="1">
    <citation type="journal article" date="1994" name="Nature">
        <title>Positional cloning of the mouse obese gene and its human homologue.</title>
        <authorList>
            <person name="Zhang Y."/>
            <person name="Proenca P."/>
            <person name="Maffei M."/>
            <person name="Barone M."/>
            <person name="Leopold L."/>
            <person name="Friedman J.M."/>
        </authorList>
    </citation>
    <scope>NUCLEOTIDE SEQUENCE [MRNA]</scope>
</reference>
<reference key="2">
    <citation type="journal article" date="1995" name="Nature">
        <authorList>
            <person name="Zhang Y."/>
            <person name="Proenca P."/>
            <person name="Maffei M."/>
            <person name="Barone M."/>
            <person name="Leopold L."/>
            <person name="Friedman J.M."/>
        </authorList>
    </citation>
    <scope>ERRATUM OF PUBMED:7984236</scope>
</reference>
<reference key="3">
    <citation type="submission" date="1995-03" db="EMBL/GenBank/DDBJ databases">
        <authorList>
            <person name="Chehab F.F."/>
            <person name="Lim M.E."/>
        </authorList>
    </citation>
    <scope>NUCLEOTIDE SEQUENCE [GENOMIC DNA]</scope>
    <source>
        <strain>C57BL/6J</strain>
    </source>
</reference>
<reference key="4">
    <citation type="journal article" date="1996" name="Nat. Genet.">
        <title>Correction of the sterility defect in homozygous obese female mice by treatment with the human recombinant leptin.</title>
        <authorList>
            <person name="Chehab F.F."/>
            <person name="Lim M.E."/>
            <person name="Lu R."/>
        </authorList>
    </citation>
    <scope>FUNCTION</scope>
    <scope>DISRUPTION PHENOTYPE</scope>
</reference>
<reference key="5">
    <citation type="journal article" date="1998" name="Nature">
        <title>Leptin modulates the T-cell immune response and reverses starvation-induced immunosuppression.</title>
        <authorList>
            <person name="Lord G.M."/>
            <person name="Matarese G."/>
            <person name="Howard J.K."/>
            <person name="Baker R.J."/>
            <person name="Bloom S.R."/>
            <person name="Lechler R.I."/>
        </authorList>
    </citation>
    <scope>FUNCTION</scope>
    <scope>DISRUPTION PHENOTYPE</scope>
</reference>
<reference key="6">
    <citation type="journal article" date="2000" name="Cell">
        <title>Leptin inhibits bone formation through a hypothalamic relay: a central control of bone mass.</title>
        <authorList>
            <person name="Ducy P."/>
            <person name="Amling M."/>
            <person name="Takeda S."/>
            <person name="Priemel M."/>
            <person name="Schilling A.F."/>
            <person name="Beil F.T."/>
            <person name="Shen J."/>
            <person name="Vinson C."/>
            <person name="Rueger J.M."/>
            <person name="Karsenty G."/>
        </authorList>
    </citation>
    <scope>FUNCTION</scope>
    <scope>DISRUPTION PHENOTYPE</scope>
</reference>
<reference key="7">
    <citation type="journal article" date="2001" name="Nature">
        <title>Leptin activates anorexigenic POMC neurons through a neural network in the arcuate nucleus.</title>
        <authorList>
            <person name="Cowley M.A."/>
            <person name="Smart J.L."/>
            <person name="Rubinstein M."/>
            <person name="Cerdan M.G."/>
            <person name="Diano S."/>
            <person name="Horvath T.L."/>
            <person name="Cone R.D."/>
            <person name="Low M.J."/>
        </authorList>
    </citation>
    <scope>FUNCTION</scope>
</reference>
<reference key="8">
    <citation type="journal article" date="2003" name="Nature">
        <title>STAT3 signalling is required for leptin regulation of energy balance but not reproduction.</title>
        <authorList>
            <person name="Bates S.H."/>
            <person name="Stearns W.H."/>
            <person name="Dundon T.A."/>
            <person name="Schubert M."/>
            <person name="Tso A.W."/>
            <person name="Wang Y."/>
            <person name="Banks A.S."/>
            <person name="Lavery H.J."/>
            <person name="Haq A.K."/>
            <person name="Maratos-Flier E."/>
            <person name="Neel B.G."/>
            <person name="Schwartz M.W."/>
            <person name="Myers M.G. Jr."/>
        </authorList>
    </citation>
    <scope>FUNCTION</scope>
</reference>
<reference key="9">
    <citation type="journal article" date="2004" name="Nat. Rev. Immunol.">
        <title>The weight of leptin in immunity.</title>
        <authorList>
            <person name="La Cava A."/>
            <person name="Matarese G."/>
        </authorList>
    </citation>
    <scope>REVIEW OF FUNCTION IN IMMUNITY</scope>
</reference>
<reference key="10">
    <citation type="journal article" date="2005" name="Arthritis Res. Ther.">
        <title>signaling pathway involved in nitric oxide synthase type II activation in chondrocytes: synergistic effect of leptin with interleukin-1.</title>
        <authorList>
            <person name="Otero M."/>
            <person name="Lago R."/>
            <person name="Lago F."/>
            <person name="Reino J.J."/>
            <person name="Gualillo O."/>
        </authorList>
    </citation>
    <scope>FUNCTION</scope>
</reference>
<reference key="11">
    <citation type="journal article" date="2006" name="J. Biol. Chem.">
        <title>Leptin signaling promotes the growth of mammary tumors and increases the expression of vascular endothelial growth factor (VEGF) and its receptor type two (VEGF-R2).</title>
        <authorList>
            <person name="Gonzalez R.R."/>
            <person name="Cherfils S."/>
            <person name="Escobar M."/>
            <person name="Yoo J.H."/>
            <person name="Carino C."/>
            <person name="Styer A.K."/>
            <person name="Sullivan B.T."/>
            <person name="Sakamoto H."/>
            <person name="Olawaiye A."/>
            <person name="Serikawa T."/>
            <person name="Lynch M.P."/>
            <person name="Rueda B.R."/>
        </authorList>
    </citation>
    <scope>FUNCTION</scope>
</reference>
<reference key="12">
    <citation type="journal article" date="2010" name="Cell Metab.">
        <title>SIRT1 deacetylase in POMC neurons is required for homeostatic defenses against diet-induced obesity.</title>
        <authorList>
            <person name="Ramadori G."/>
            <person name="Fujikawa T."/>
            <person name="Fukuda M."/>
            <person name="Anderson J."/>
            <person name="Morgan D.A."/>
            <person name="Mostoslavsky R."/>
            <person name="Stuart R.C."/>
            <person name="Perello M."/>
            <person name="Vianna C.R."/>
            <person name="Nillni E.A."/>
            <person name="Rahmouni K."/>
            <person name="Coppari R."/>
        </authorList>
    </citation>
    <scope>FUNCTION</scope>
</reference>
<reference key="13">
    <citation type="journal article" date="2014" name="J. Endocrinol.">
        <title>20 years of leptin: connecting leptin signaling to biological function.</title>
        <authorList>
            <person name="Allison M.B."/>
            <person name="Myers M.G. Jr."/>
        </authorList>
    </citation>
    <scope>REVIEW OF FUNCTION</scope>
</reference>
<reference key="14">
    <citation type="journal article" date="2014" name="Metabolism">
        <title>Leptin modulates autophagy in human CD4+CD25- conventional T cells.</title>
        <authorList>
            <person name="Cassano S."/>
            <person name="Pucino V."/>
            <person name="La Rocca C."/>
            <person name="Procaccini C."/>
            <person name="De Rosa V."/>
            <person name="Marone G."/>
            <person name="Matarese G."/>
        </authorList>
    </citation>
    <scope>FUNCTION</scope>
    <scope>DISRUPTION PHENOTYPE</scope>
</reference>
<reference key="15">
    <citation type="journal article" date="2014" name="Nat. Neurosci.">
        <title>Leptin-inhibited PBN neurons enhance responses to hypoglycemia in negative energy balance.</title>
        <authorList>
            <person name="Flak J.N."/>
            <person name="Patterson C.M."/>
            <person name="Garfield A.S."/>
            <person name="D'Agostino G."/>
            <person name="Goforth P.B."/>
            <person name="Sutton A.K."/>
            <person name="Malec P.A."/>
            <person name="Wong J.M."/>
            <person name="Germani M."/>
            <person name="Jones J.C."/>
            <person name="Rajala M."/>
            <person name="Satin L."/>
            <person name="Rhodes C.J."/>
            <person name="Olson D.P."/>
            <person name="Kennedy R.T."/>
            <person name="Heisler L.K."/>
            <person name="Myers M.G. Jr."/>
        </authorList>
    </citation>
    <scope>FUNCTION</scope>
</reference>
<evidence type="ECO:0000250" key="1"/>
<evidence type="ECO:0000250" key="2">
    <source>
        <dbReference type="UniProtKB" id="P41159"/>
    </source>
</evidence>
<evidence type="ECO:0000250" key="3">
    <source>
        <dbReference type="UniProtKB" id="P50596"/>
    </source>
</evidence>
<evidence type="ECO:0000255" key="4"/>
<evidence type="ECO:0000269" key="5">
    <source>
    </source>
</evidence>
<evidence type="ECO:0000269" key="6">
    <source>
    </source>
</evidence>
<evidence type="ECO:0000269" key="7">
    <source>
    </source>
</evidence>
<evidence type="ECO:0000269" key="8">
    <source>
    </source>
</evidence>
<evidence type="ECO:0000269" key="9">
    <source>
    </source>
</evidence>
<evidence type="ECO:0000269" key="10">
    <source>
    </source>
</evidence>
<evidence type="ECO:0000269" key="11">
    <source>
    </source>
</evidence>
<evidence type="ECO:0000269" key="12">
    <source>
    </source>
</evidence>
<evidence type="ECO:0000269" key="13">
    <source>
    </source>
</evidence>
<evidence type="ECO:0000269" key="14">
    <source>
    </source>
</evidence>
<evidence type="ECO:0000305" key="15"/>
<evidence type="ECO:0000305" key="16">
    <source>
    </source>
</evidence>
<evidence type="ECO:0000305" key="17">
    <source>
    </source>
</evidence>
<evidence type="ECO:0007829" key="18">
    <source>
        <dbReference type="PDB" id="7Z3P"/>
    </source>
</evidence>
<evidence type="ECO:0007829" key="19">
    <source>
        <dbReference type="PDB" id="7Z3R"/>
    </source>
</evidence>
<comment type="function">
    <text evidence="2 3 5 6 7 8 9 10 11 12 13 14 16 17">Key player in the regulation of energy balance and body weight control. Once released into the circulation, has central and peripheral effects by binding LEPR, found in many tissues, which results in the activation of several major signaling pathways (PubMed:11373681, PubMed:12594516, PubMed:15899045, PubMed:16825198, PubMed:20620997). In the hypothalamus, acts as an appetite-regulating factor that induces a decrease in food intake and an increase in energy consumption by inducing anorexinogenic factors and suppressing orexigenic neuropeptides, also regulates bone mass and secretion of hypothalamo-pituitary-adrenal hormones. In the periphery, increases basal metabolism, influences reproductive function, regulates pancreatic beta-cell function and insulin secretion, is pro-angiogenic for endothelial cell and affects innate and adaptive immunity (By similarity) (PubMed:10660043, PubMed:12594516, PubMed:25060689, PubMed:25383904, PubMed:8589726, PubMed:9732873). In the arcuate nucleus of the hypothalamus, activates by depolarization POMC neurons inducing FOS and SOCS3 expression to release anorexigenic peptides and inhibits by hyperpolarization NPY neurons inducing SOCS3 with a consequent reduction on release of orexigenic peptides (By similarity) (PubMed:11373681, PubMed:20620997). In addition to its known satiety inducing effect, has a modulatory role in nutrient absorption. In the intestine, reduces glucose absorption by enterocytes by activating PKC and leading to a sequential activation of p38, PI3K and ERK signaling pathways which exerts an inhibitory effect on glucose absorption. Acts as a growth factor on certain tissues, through the activation of different signaling pathways increases expression of genes involved in cell cycle regulation such as CCND1, via JAK2-STAT3 pathway, or VEGFA, via MAPK1/3 and PI3K-AKT1 pathways (By similarity) (PubMed:16825198, PubMed:20620997). May also play an apoptotic role via JAK2-STAT3 pathway and up-regulation of BIRC5 expression (By similarity). Pro-angiogenic, has mitogenic activity on vascular endothelial cells and plays a role in matrix remodeling by regulating the expression of matrix metalloproteinases (MMPs) and tissue inhibitors of metalloproteinases (TIMPs) (PubMed:16825198). In innate immunity, modulates the activity and function of neutrophils by increasing chemotaxis and the secretion of oxygen radicals. Increases phagocytosis by macrophages and enhances secretion of pro-inflammatory mediators. Increases cytotoxic ability of NK cells (Probable). Plays a pro-inflammatory role, in synergy with IL1B, by inducing NOS2 which promotes the production of IL6, IL8 and Prostaglandin E2, through a signaling pathway that involves JAK2, PI3K, MAP2K1/MEK1 and MAPK14/p38 (PubMed:15899045). In adaptive immunity, promotes the switch of memory T-cells towards T helper-1 cell immune responses (By similarity). Increases CD4(+)CD25(-) T cells proliferation and reduces autophagy during TCR (T cell receptor) stimulation, through MTOR signaling pathway activation and BCL2 up-regulation (PubMed:25060689).</text>
</comment>
<comment type="interaction">
    <interactant intactId="EBI-16108810">
        <id>P41160</id>
    </interactant>
    <interactant intactId="EBI-2257257">
        <id>P48356</id>
        <label>Lepr</label>
    </interactant>
    <organismsDiffer>false</organismsDiffer>
    <experiments>6</experiments>
</comment>
<comment type="subcellular location">
    <subcellularLocation>
        <location evidence="17">Secreted</location>
    </subcellularLocation>
</comment>
<comment type="disease">
    <text>Defects in Lep are the cause of profound obesity and type II diabetes.</text>
</comment>
<comment type="disruption phenotype">
    <text evidence="5 11 13 14">Mutants are severely obese and sterile (PubMed:8589726). Animals have an increased bone formation leading to high bone mass (PubMed:10660043). Have impaired T-cell immunity, Th2 responses are favoured in mutants (PubMed:9732873). CD4(+)CD25(-) T-cells of mutant mice show high levels of autophagy (PubMed:25060689).</text>
</comment>
<comment type="similarity">
    <text evidence="15">Belongs to the leptin family.</text>
</comment>
<gene>
    <name type="primary">Lep</name>
    <name type="synonym">Ob</name>
</gene>
<accession>P41160</accession>